<evidence type="ECO:0000269" key="1">
    <source>
    </source>
</evidence>
<evidence type="ECO:0000305" key="2"/>
<evidence type="ECO:0000312" key="3">
    <source>
        <dbReference type="FlyBase" id="FBgn0083967"/>
    </source>
</evidence>
<keyword id="KW-1185">Reference proteome</keyword>
<protein>
    <recommendedName>
        <fullName>Biogenesis of lysosome-related organelles complex 1 subunit 5</fullName>
        <shortName>BLOC-1 subunit 5</shortName>
    </recommendedName>
    <alternativeName>
        <fullName>Protein Muted</fullName>
    </alternativeName>
</protein>
<sequence>MKIMISQVGRELYKVPLRILDHRVFVNGEIEAFLENFEVRRNDSEVEKLFQVTETVGSLKYDLSRCSATGRGSGAENLAQLDTEVSHLLDGVNALLAKAKVERTASTQLQEARLAREQRRAEFLTNLEHGYRRIENSFEEKEEEIAELYSDLQLKLNIAK</sequence>
<gene>
    <name evidence="3" type="primary">Muted</name>
    <name evidence="3" type="ORF">CG34131</name>
</gene>
<dbReference type="EMBL" id="AE014297">
    <property type="protein sequence ID" value="ABI31195.1"/>
    <property type="molecule type" value="Genomic_DNA"/>
</dbReference>
<dbReference type="RefSeq" id="NP_001036744.1">
    <property type="nucleotide sequence ID" value="NM_001043279.1"/>
</dbReference>
<dbReference type="RefSeq" id="NP_001287464.1">
    <property type="nucleotide sequence ID" value="NM_001300535.1"/>
</dbReference>
<dbReference type="SMR" id="Q0KI28"/>
<dbReference type="BioGRID" id="607089">
    <property type="interactions" value="1"/>
</dbReference>
<dbReference type="ComplexPortal" id="CPX-2753">
    <property type="entry name" value="BLOC-1 complex"/>
</dbReference>
<dbReference type="FunCoup" id="Q0KI28">
    <property type="interactions" value="13"/>
</dbReference>
<dbReference type="IntAct" id="Q0KI28">
    <property type="interactions" value="4"/>
</dbReference>
<dbReference type="STRING" id="7227.FBpp0310877"/>
<dbReference type="PaxDb" id="7227-FBpp0110178"/>
<dbReference type="EnsemblMetazoa" id="FBtr0110878">
    <property type="protein sequence ID" value="FBpp0110178"/>
    <property type="gene ID" value="FBgn0083967"/>
</dbReference>
<dbReference type="EnsemblMetazoa" id="FBtr0344526">
    <property type="protein sequence ID" value="FBpp0310877"/>
    <property type="gene ID" value="FBgn0083967"/>
</dbReference>
<dbReference type="GeneID" id="4379860"/>
<dbReference type="KEGG" id="dme:Dmel_CG34131"/>
<dbReference type="UCSC" id="CG34131-RA">
    <property type="organism name" value="d. melanogaster"/>
</dbReference>
<dbReference type="AGR" id="FB:FBgn0083967"/>
<dbReference type="CTD" id="4379860"/>
<dbReference type="FlyBase" id="FBgn0083967">
    <property type="gene designation" value="Muted"/>
</dbReference>
<dbReference type="VEuPathDB" id="VectorBase:FBgn0083967"/>
<dbReference type="eggNOG" id="ENOG502S5R8">
    <property type="taxonomic scope" value="Eukaryota"/>
</dbReference>
<dbReference type="GeneTree" id="ENSGT00390000016974"/>
<dbReference type="HOGENOM" id="CLU_110751_2_0_1"/>
<dbReference type="InParanoid" id="Q0KI28"/>
<dbReference type="OMA" id="EFHERRQ"/>
<dbReference type="OrthoDB" id="18964at2759"/>
<dbReference type="PhylomeDB" id="Q0KI28"/>
<dbReference type="BioGRID-ORCS" id="4379860">
    <property type="hits" value="0 hits in 1 CRISPR screen"/>
</dbReference>
<dbReference type="GenomeRNAi" id="4379860"/>
<dbReference type="PRO" id="PR:Q0KI28"/>
<dbReference type="Proteomes" id="UP000000803">
    <property type="component" value="Chromosome 3R"/>
</dbReference>
<dbReference type="Bgee" id="FBgn0083967">
    <property type="expression patterns" value="Expressed in digestive system element and 24 other cell types or tissues"/>
</dbReference>
<dbReference type="GO" id="GO:0031083">
    <property type="term" value="C:BLOC-1 complex"/>
    <property type="evidence" value="ECO:0000250"/>
    <property type="project" value="FlyBase"/>
</dbReference>
<dbReference type="GO" id="GO:0030133">
    <property type="term" value="C:transport vesicle"/>
    <property type="evidence" value="ECO:0007669"/>
    <property type="project" value="InterPro"/>
</dbReference>
<dbReference type="InterPro" id="IPR017243">
    <property type="entry name" value="Bloc1s5"/>
</dbReference>
<dbReference type="PANTHER" id="PTHR31784">
    <property type="entry name" value="BIOGENESIS OF LYSOSOME-RELATED ORGANELLES COMPLEX 1 SUBUNIT 5"/>
    <property type="match status" value="1"/>
</dbReference>
<dbReference type="PANTHER" id="PTHR31784:SF2">
    <property type="entry name" value="BIOGENESIS OF LYSOSOME-RELATED ORGANELLES COMPLEX 1 SUBUNIT 5"/>
    <property type="match status" value="1"/>
</dbReference>
<dbReference type="Pfam" id="PF14942">
    <property type="entry name" value="Muted"/>
    <property type="match status" value="1"/>
</dbReference>
<comment type="function">
    <text evidence="1">Component of the biogenesis of lysosome-related organelles complex-1 (BLOC-1) involved in pigment granule biogenesis.</text>
</comment>
<comment type="subunit">
    <text evidence="1">Component of the biogenesis of lysosome-related organelles complex-1 (BLOC-1) composed of Blos1, Blos2, Blos3, Blos4, Dysb, Muted, Pldn and Snapin.</text>
</comment>
<comment type="similarity">
    <text evidence="2">Belongs to the BLOC1S5 family.</text>
</comment>
<name>BL1S5_DROME</name>
<organism>
    <name type="scientific">Drosophila melanogaster</name>
    <name type="common">Fruit fly</name>
    <dbReference type="NCBI Taxonomy" id="7227"/>
    <lineage>
        <taxon>Eukaryota</taxon>
        <taxon>Metazoa</taxon>
        <taxon>Ecdysozoa</taxon>
        <taxon>Arthropoda</taxon>
        <taxon>Hexapoda</taxon>
        <taxon>Insecta</taxon>
        <taxon>Pterygota</taxon>
        <taxon>Neoptera</taxon>
        <taxon>Endopterygota</taxon>
        <taxon>Diptera</taxon>
        <taxon>Brachycera</taxon>
        <taxon>Muscomorpha</taxon>
        <taxon>Ephydroidea</taxon>
        <taxon>Drosophilidae</taxon>
        <taxon>Drosophila</taxon>
        <taxon>Sophophora</taxon>
    </lineage>
</organism>
<feature type="chain" id="PRO_0000420198" description="Biogenesis of lysosome-related organelles complex 1 subunit 5">
    <location>
        <begin position="1"/>
        <end position="160"/>
    </location>
</feature>
<reference key="1">
    <citation type="journal article" date="2000" name="Science">
        <title>The genome sequence of Drosophila melanogaster.</title>
        <authorList>
            <person name="Adams M.D."/>
            <person name="Celniker S.E."/>
            <person name="Holt R.A."/>
            <person name="Evans C.A."/>
            <person name="Gocayne J.D."/>
            <person name="Amanatides P.G."/>
            <person name="Scherer S.E."/>
            <person name="Li P.W."/>
            <person name="Hoskins R.A."/>
            <person name="Galle R.F."/>
            <person name="George R.A."/>
            <person name="Lewis S.E."/>
            <person name="Richards S."/>
            <person name="Ashburner M."/>
            <person name="Henderson S.N."/>
            <person name="Sutton G.G."/>
            <person name="Wortman J.R."/>
            <person name="Yandell M.D."/>
            <person name="Zhang Q."/>
            <person name="Chen L.X."/>
            <person name="Brandon R.C."/>
            <person name="Rogers Y.-H.C."/>
            <person name="Blazej R.G."/>
            <person name="Champe M."/>
            <person name="Pfeiffer B.D."/>
            <person name="Wan K.H."/>
            <person name="Doyle C."/>
            <person name="Baxter E.G."/>
            <person name="Helt G."/>
            <person name="Nelson C.R."/>
            <person name="Miklos G.L.G."/>
            <person name="Abril J.F."/>
            <person name="Agbayani A."/>
            <person name="An H.-J."/>
            <person name="Andrews-Pfannkoch C."/>
            <person name="Baldwin D."/>
            <person name="Ballew R.M."/>
            <person name="Basu A."/>
            <person name="Baxendale J."/>
            <person name="Bayraktaroglu L."/>
            <person name="Beasley E.M."/>
            <person name="Beeson K.Y."/>
            <person name="Benos P.V."/>
            <person name="Berman B.P."/>
            <person name="Bhandari D."/>
            <person name="Bolshakov S."/>
            <person name="Borkova D."/>
            <person name="Botchan M.R."/>
            <person name="Bouck J."/>
            <person name="Brokstein P."/>
            <person name="Brottier P."/>
            <person name="Burtis K.C."/>
            <person name="Busam D.A."/>
            <person name="Butler H."/>
            <person name="Cadieu E."/>
            <person name="Center A."/>
            <person name="Chandra I."/>
            <person name="Cherry J.M."/>
            <person name="Cawley S."/>
            <person name="Dahlke C."/>
            <person name="Davenport L.B."/>
            <person name="Davies P."/>
            <person name="de Pablos B."/>
            <person name="Delcher A."/>
            <person name="Deng Z."/>
            <person name="Mays A.D."/>
            <person name="Dew I."/>
            <person name="Dietz S.M."/>
            <person name="Dodson K."/>
            <person name="Doup L.E."/>
            <person name="Downes M."/>
            <person name="Dugan-Rocha S."/>
            <person name="Dunkov B.C."/>
            <person name="Dunn P."/>
            <person name="Durbin K.J."/>
            <person name="Evangelista C.C."/>
            <person name="Ferraz C."/>
            <person name="Ferriera S."/>
            <person name="Fleischmann W."/>
            <person name="Fosler C."/>
            <person name="Gabrielian A.E."/>
            <person name="Garg N.S."/>
            <person name="Gelbart W.M."/>
            <person name="Glasser K."/>
            <person name="Glodek A."/>
            <person name="Gong F."/>
            <person name="Gorrell J.H."/>
            <person name="Gu Z."/>
            <person name="Guan P."/>
            <person name="Harris M."/>
            <person name="Harris N.L."/>
            <person name="Harvey D.A."/>
            <person name="Heiman T.J."/>
            <person name="Hernandez J.R."/>
            <person name="Houck J."/>
            <person name="Hostin D."/>
            <person name="Houston K.A."/>
            <person name="Howland T.J."/>
            <person name="Wei M.-H."/>
            <person name="Ibegwam C."/>
            <person name="Jalali M."/>
            <person name="Kalush F."/>
            <person name="Karpen G.H."/>
            <person name="Ke Z."/>
            <person name="Kennison J.A."/>
            <person name="Ketchum K.A."/>
            <person name="Kimmel B.E."/>
            <person name="Kodira C.D."/>
            <person name="Kraft C.L."/>
            <person name="Kravitz S."/>
            <person name="Kulp D."/>
            <person name="Lai Z."/>
            <person name="Lasko P."/>
            <person name="Lei Y."/>
            <person name="Levitsky A.A."/>
            <person name="Li J.H."/>
            <person name="Li Z."/>
            <person name="Liang Y."/>
            <person name="Lin X."/>
            <person name="Liu X."/>
            <person name="Mattei B."/>
            <person name="McIntosh T.C."/>
            <person name="McLeod M.P."/>
            <person name="McPherson D."/>
            <person name="Merkulov G."/>
            <person name="Milshina N.V."/>
            <person name="Mobarry C."/>
            <person name="Morris J."/>
            <person name="Moshrefi A."/>
            <person name="Mount S.M."/>
            <person name="Moy M."/>
            <person name="Murphy B."/>
            <person name="Murphy L."/>
            <person name="Muzny D.M."/>
            <person name="Nelson D.L."/>
            <person name="Nelson D.R."/>
            <person name="Nelson K.A."/>
            <person name="Nixon K."/>
            <person name="Nusskern D.R."/>
            <person name="Pacleb J.M."/>
            <person name="Palazzolo M."/>
            <person name="Pittman G.S."/>
            <person name="Pan S."/>
            <person name="Pollard J."/>
            <person name="Puri V."/>
            <person name="Reese M.G."/>
            <person name="Reinert K."/>
            <person name="Remington K."/>
            <person name="Saunders R.D.C."/>
            <person name="Scheeler F."/>
            <person name="Shen H."/>
            <person name="Shue B.C."/>
            <person name="Siden-Kiamos I."/>
            <person name="Simpson M."/>
            <person name="Skupski M.P."/>
            <person name="Smith T.J."/>
            <person name="Spier E."/>
            <person name="Spradling A.C."/>
            <person name="Stapleton M."/>
            <person name="Strong R."/>
            <person name="Sun E."/>
            <person name="Svirskas R."/>
            <person name="Tector C."/>
            <person name="Turner R."/>
            <person name="Venter E."/>
            <person name="Wang A.H."/>
            <person name="Wang X."/>
            <person name="Wang Z.-Y."/>
            <person name="Wassarman D.A."/>
            <person name="Weinstock G.M."/>
            <person name="Weissenbach J."/>
            <person name="Williams S.M."/>
            <person name="Woodage T."/>
            <person name="Worley K.C."/>
            <person name="Wu D."/>
            <person name="Yang S."/>
            <person name="Yao Q.A."/>
            <person name="Ye J."/>
            <person name="Yeh R.-F."/>
            <person name="Zaveri J.S."/>
            <person name="Zhan M."/>
            <person name="Zhang G."/>
            <person name="Zhao Q."/>
            <person name="Zheng L."/>
            <person name="Zheng X.H."/>
            <person name="Zhong F.N."/>
            <person name="Zhong W."/>
            <person name="Zhou X."/>
            <person name="Zhu S.C."/>
            <person name="Zhu X."/>
            <person name="Smith H.O."/>
            <person name="Gibbs R.A."/>
            <person name="Myers E.W."/>
            <person name="Rubin G.M."/>
            <person name="Venter J.C."/>
        </authorList>
    </citation>
    <scope>NUCLEOTIDE SEQUENCE [LARGE SCALE GENOMIC DNA]</scope>
    <source>
        <strain>Berkeley</strain>
    </source>
</reference>
<reference key="2">
    <citation type="journal article" date="2002" name="Genome Biol.">
        <title>Annotation of the Drosophila melanogaster euchromatic genome: a systematic review.</title>
        <authorList>
            <person name="Misra S."/>
            <person name="Crosby M.A."/>
            <person name="Mungall C.J."/>
            <person name="Matthews B.B."/>
            <person name="Campbell K.S."/>
            <person name="Hradecky P."/>
            <person name="Huang Y."/>
            <person name="Kaminker J.S."/>
            <person name="Millburn G.H."/>
            <person name="Prochnik S.E."/>
            <person name="Smith C.D."/>
            <person name="Tupy J.L."/>
            <person name="Whitfield E.J."/>
            <person name="Bayraktaroglu L."/>
            <person name="Berman B.P."/>
            <person name="Bettencourt B.R."/>
            <person name="Celniker S.E."/>
            <person name="de Grey A.D.N.J."/>
            <person name="Drysdale R.A."/>
            <person name="Harris N.L."/>
            <person name="Richter J."/>
            <person name="Russo S."/>
            <person name="Schroeder A.J."/>
            <person name="Shu S.Q."/>
            <person name="Stapleton M."/>
            <person name="Yamada C."/>
            <person name="Ashburner M."/>
            <person name="Gelbart W.M."/>
            <person name="Rubin G.M."/>
            <person name="Lewis S.E."/>
        </authorList>
    </citation>
    <scope>GENOME REANNOTATION</scope>
    <source>
        <strain>Berkeley</strain>
    </source>
</reference>
<reference key="3">
    <citation type="journal article" date="2010" name="Hum. Mol. Genet.">
        <title>Genetic modifiers of abnormal organelle biogenesis in a Drosophila model of BLOC-1 deficiency.</title>
        <authorList>
            <person name="Cheli V.T."/>
            <person name="Daniels R.W."/>
            <person name="Godoy R."/>
            <person name="Hoyle D.J."/>
            <person name="Kandachar V."/>
            <person name="Starcevic M."/>
            <person name="Martinez-Agosto J.A."/>
            <person name="Poole S."/>
            <person name="DiAntonio A."/>
            <person name="Lloyd V.K."/>
            <person name="Chang H.C."/>
            <person name="Krantz D.E."/>
            <person name="Dell'Angelica E.C."/>
        </authorList>
    </citation>
    <scope>IDENTIFICATION IN THE BLOC-1 COMPLEX</scope>
    <scope>FUNCTION</scope>
</reference>
<accession>Q0KI28</accession>
<proteinExistence type="evidence at protein level"/>